<keyword id="KW-0010">Activator</keyword>
<keyword id="KW-0071">Autoinducer synthesis</keyword>
<keyword id="KW-0238">DNA-binding</keyword>
<keyword id="KW-0597">Phosphoprotein</keyword>
<keyword id="KW-1185">Reference proteome</keyword>
<keyword id="KW-0804">Transcription</keyword>
<keyword id="KW-0805">Transcription regulation</keyword>
<keyword id="KW-0902">Two-component regulatory system</keyword>
<keyword id="KW-0843">Virulence</keyword>
<sequence>MIKVLVVDDHDLVRTGITRMLADIEGLQVVGQADCGEDCLKLARELKPDVVLMDVKMPGIGGLEATRKLLRSQPDIKVVVVTVCEEDPFPTRLMQAGAAGYMTKGAGLEEMVQAIRQVFAGQRYISPQIAQQLALKSFQPQQHDSPFDSLSEREIQIALMIANCHKVQSISDKLCLSPKTVNTYRYRIFEKLSITSDVELALLAVRHGMVDAAS</sequence>
<accession>Q51373</accession>
<accession>O06649</accession>
<evidence type="ECO:0000255" key="1">
    <source>
        <dbReference type="PROSITE-ProRule" id="PRU00169"/>
    </source>
</evidence>
<evidence type="ECO:0000255" key="2">
    <source>
        <dbReference type="PROSITE-ProRule" id="PRU00411"/>
    </source>
</evidence>
<evidence type="ECO:0000305" key="3"/>
<proteinExistence type="inferred from homology"/>
<gene>
    <name type="primary">gacA</name>
    <name type="ordered locus">PA2586</name>
</gene>
<name>GACA_PSEAE</name>
<reference key="1">
    <citation type="submission" date="1995-07" db="EMBL/GenBank/DDBJ databases">
        <authorList>
            <person name="Kinscherf T.L."/>
            <person name="Sharp K.R."/>
            <person name="Kitten T.O."/>
            <person name="Willis D.K."/>
        </authorList>
    </citation>
    <scope>NUCLEOTIDE SEQUENCE [GENOMIC DNA]</scope>
    <source>
        <strain>ATCC 15692 / DSM 22644 / CIP 104116 / JCM 14847 / LMG 12228 / 1C / PRS 101 / PAO1</strain>
    </source>
</reference>
<reference key="2">
    <citation type="journal article" date="1997" name="Mol. Microbiol.">
        <title>The global activator GacA of Pseudomonas aeruginosa PAO positively controls the production of the autoinducer N-butyryl-homoserine lactone and the formation of the virulence factors pyocyanin, cyanide, and lipase.</title>
        <authorList>
            <person name="Reimmann C."/>
            <person name="Beyeler M."/>
            <person name="Latifi A."/>
            <person name="Winteler H."/>
            <person name="Foglino M."/>
            <person name="Lazdunski A."/>
            <person name="Haas D."/>
        </authorList>
    </citation>
    <scope>NUCLEOTIDE SEQUENCE [GENOMIC DNA]</scope>
    <source>
        <strain>ATCC 15692 / DSM 22644 / CIP 104116 / JCM 14847 / LMG 12228 / 1C / PRS 101 / PAO1</strain>
    </source>
</reference>
<reference key="3">
    <citation type="journal article" date="2000" name="Nature">
        <title>Complete genome sequence of Pseudomonas aeruginosa PAO1, an opportunistic pathogen.</title>
        <authorList>
            <person name="Stover C.K."/>
            <person name="Pham X.-Q.T."/>
            <person name="Erwin A.L."/>
            <person name="Mizoguchi S.D."/>
            <person name="Warrener P."/>
            <person name="Hickey M.J."/>
            <person name="Brinkman F.S.L."/>
            <person name="Hufnagle W.O."/>
            <person name="Kowalik D.J."/>
            <person name="Lagrou M."/>
            <person name="Garber R.L."/>
            <person name="Goltry L."/>
            <person name="Tolentino E."/>
            <person name="Westbrock-Wadman S."/>
            <person name="Yuan Y."/>
            <person name="Brody L.L."/>
            <person name="Coulter S.N."/>
            <person name="Folger K.R."/>
            <person name="Kas A."/>
            <person name="Larbig K."/>
            <person name="Lim R.M."/>
            <person name="Smith K.A."/>
            <person name="Spencer D.H."/>
            <person name="Wong G.K.-S."/>
            <person name="Wu Z."/>
            <person name="Paulsen I.T."/>
            <person name="Reizer J."/>
            <person name="Saier M.H. Jr."/>
            <person name="Hancock R.E.W."/>
            <person name="Lory S."/>
            <person name="Olson M.V."/>
        </authorList>
    </citation>
    <scope>NUCLEOTIDE SEQUENCE [LARGE SCALE GENOMIC DNA]</scope>
    <source>
        <strain>ATCC 15692 / DSM 22644 / CIP 104116 / JCM 14847 / LMG 12228 / 1C / PRS 101 / PAO1</strain>
    </source>
</reference>
<protein>
    <recommendedName>
        <fullName>Response regulator GacA</fullName>
    </recommendedName>
    <alternativeName>
        <fullName>Global activator</fullName>
    </alternativeName>
</protein>
<comment type="function">
    <text>Positively controls the production of the autoinducer N-butyryl-homoserine lactone and the formation of the virulence factors pyocyanine, cyanide, and lipase.</text>
</comment>
<organism>
    <name type="scientific">Pseudomonas aeruginosa (strain ATCC 15692 / DSM 22644 / CIP 104116 / JCM 14847 / LMG 12228 / 1C / PRS 101 / PAO1)</name>
    <dbReference type="NCBI Taxonomy" id="208964"/>
    <lineage>
        <taxon>Bacteria</taxon>
        <taxon>Pseudomonadati</taxon>
        <taxon>Pseudomonadota</taxon>
        <taxon>Gammaproteobacteria</taxon>
        <taxon>Pseudomonadales</taxon>
        <taxon>Pseudomonadaceae</taxon>
        <taxon>Pseudomonas</taxon>
    </lineage>
</organism>
<feature type="chain" id="PRO_0000081287" description="Response regulator GacA">
    <location>
        <begin position="1"/>
        <end position="214"/>
    </location>
</feature>
<feature type="domain" description="Response regulatory" evidence="1">
    <location>
        <begin position="3"/>
        <end position="119"/>
    </location>
</feature>
<feature type="domain" description="HTH luxR-type" evidence="2">
    <location>
        <begin position="143"/>
        <end position="208"/>
    </location>
</feature>
<feature type="DNA-binding region" description="H-T-H motif" evidence="2">
    <location>
        <begin position="167"/>
        <end position="186"/>
    </location>
</feature>
<feature type="modified residue" description="4-aspartylphosphate" evidence="1">
    <location>
        <position position="54"/>
    </location>
</feature>
<feature type="sequence conflict" description="In Ref. 1; AAA68948." evidence="3" ref="1">
    <location>
        <position position="99"/>
    </location>
</feature>
<dbReference type="EMBL" id="U27988">
    <property type="protein sequence ID" value="AAA68948.1"/>
    <property type="molecule type" value="Genomic_DNA"/>
</dbReference>
<dbReference type="EMBL" id="U89528">
    <property type="protein sequence ID" value="AAC45328.1"/>
    <property type="molecule type" value="Genomic_DNA"/>
</dbReference>
<dbReference type="EMBL" id="AE004091">
    <property type="protein sequence ID" value="AAG05974.1"/>
    <property type="molecule type" value="Genomic_DNA"/>
</dbReference>
<dbReference type="PIR" id="D83322">
    <property type="entry name" value="D83322"/>
</dbReference>
<dbReference type="RefSeq" id="NP_251276.1">
    <property type="nucleotide sequence ID" value="NC_002516.2"/>
</dbReference>
<dbReference type="SMR" id="Q51373"/>
<dbReference type="FunCoup" id="Q51373">
    <property type="interactions" value="248"/>
</dbReference>
<dbReference type="IntAct" id="Q51373">
    <property type="interactions" value="1"/>
</dbReference>
<dbReference type="MINT" id="Q51373"/>
<dbReference type="STRING" id="208964.PA2586"/>
<dbReference type="PaxDb" id="208964-PA2586"/>
<dbReference type="GeneID" id="880582"/>
<dbReference type="KEGG" id="pae:PA2586"/>
<dbReference type="PATRIC" id="fig|208964.12.peg.2706"/>
<dbReference type="PseudoCAP" id="PA2586"/>
<dbReference type="HOGENOM" id="CLU_000445_90_1_6"/>
<dbReference type="InParanoid" id="Q51373"/>
<dbReference type="OrthoDB" id="9796655at2"/>
<dbReference type="PhylomeDB" id="Q51373"/>
<dbReference type="BioCyc" id="PAER208964:G1FZ6-2625-MONOMER"/>
<dbReference type="Proteomes" id="UP000002438">
    <property type="component" value="Chromosome"/>
</dbReference>
<dbReference type="GO" id="GO:0003677">
    <property type="term" value="F:DNA binding"/>
    <property type="evidence" value="ECO:0007669"/>
    <property type="project" value="UniProtKB-KW"/>
</dbReference>
<dbReference type="GO" id="GO:0000160">
    <property type="term" value="P:phosphorelay signal transduction system"/>
    <property type="evidence" value="ECO:0007669"/>
    <property type="project" value="UniProtKB-KW"/>
</dbReference>
<dbReference type="GO" id="GO:1900233">
    <property type="term" value="P:positive regulation of single-species biofilm formation on inanimate substrate"/>
    <property type="evidence" value="ECO:0000315"/>
    <property type="project" value="PseudoCAP"/>
</dbReference>
<dbReference type="GO" id="GO:0006355">
    <property type="term" value="P:regulation of DNA-templated transcription"/>
    <property type="evidence" value="ECO:0007669"/>
    <property type="project" value="InterPro"/>
</dbReference>
<dbReference type="CDD" id="cd06170">
    <property type="entry name" value="LuxR_C_like"/>
    <property type="match status" value="1"/>
</dbReference>
<dbReference type="CDD" id="cd17535">
    <property type="entry name" value="REC_NarL-like"/>
    <property type="match status" value="1"/>
</dbReference>
<dbReference type="FunFam" id="3.40.50.2300:FF:000015">
    <property type="entry name" value="Two-component response regulator UvrY"/>
    <property type="match status" value="1"/>
</dbReference>
<dbReference type="Gene3D" id="3.40.50.2300">
    <property type="match status" value="1"/>
</dbReference>
<dbReference type="InterPro" id="IPR011006">
    <property type="entry name" value="CheY-like_superfamily"/>
</dbReference>
<dbReference type="InterPro" id="IPR016032">
    <property type="entry name" value="Sig_transdc_resp-reg_C-effctor"/>
</dbReference>
<dbReference type="InterPro" id="IPR001789">
    <property type="entry name" value="Sig_transdc_resp-reg_receiver"/>
</dbReference>
<dbReference type="InterPro" id="IPR000792">
    <property type="entry name" value="Tscrpt_reg_LuxR_C"/>
</dbReference>
<dbReference type="InterPro" id="IPR039420">
    <property type="entry name" value="WalR-like"/>
</dbReference>
<dbReference type="NCBIfam" id="NF007018">
    <property type="entry name" value="PRK09483.1"/>
    <property type="match status" value="1"/>
</dbReference>
<dbReference type="PANTHER" id="PTHR43214:SF3">
    <property type="entry name" value="RESPONSE REGULATOR UVRY"/>
    <property type="match status" value="1"/>
</dbReference>
<dbReference type="PANTHER" id="PTHR43214">
    <property type="entry name" value="TWO-COMPONENT RESPONSE REGULATOR"/>
    <property type="match status" value="1"/>
</dbReference>
<dbReference type="Pfam" id="PF00196">
    <property type="entry name" value="GerE"/>
    <property type="match status" value="1"/>
</dbReference>
<dbReference type="Pfam" id="PF00072">
    <property type="entry name" value="Response_reg"/>
    <property type="match status" value="1"/>
</dbReference>
<dbReference type="PRINTS" id="PR00038">
    <property type="entry name" value="HTHLUXR"/>
</dbReference>
<dbReference type="SMART" id="SM00421">
    <property type="entry name" value="HTH_LUXR"/>
    <property type="match status" value="1"/>
</dbReference>
<dbReference type="SMART" id="SM00448">
    <property type="entry name" value="REC"/>
    <property type="match status" value="1"/>
</dbReference>
<dbReference type="SUPFAM" id="SSF46894">
    <property type="entry name" value="C-terminal effector domain of the bipartite response regulators"/>
    <property type="match status" value="1"/>
</dbReference>
<dbReference type="SUPFAM" id="SSF52172">
    <property type="entry name" value="CheY-like"/>
    <property type="match status" value="1"/>
</dbReference>
<dbReference type="PROSITE" id="PS00622">
    <property type="entry name" value="HTH_LUXR_1"/>
    <property type="match status" value="1"/>
</dbReference>
<dbReference type="PROSITE" id="PS50043">
    <property type="entry name" value="HTH_LUXR_2"/>
    <property type="match status" value="1"/>
</dbReference>
<dbReference type="PROSITE" id="PS50110">
    <property type="entry name" value="RESPONSE_REGULATORY"/>
    <property type="match status" value="1"/>
</dbReference>